<sequence>MHTPIGVKPVAGSKEWREAWQKRAFAHISNGYKHIYIAINSPEIFLLVCFLIRI</sequence>
<dbReference type="EMBL" id="CP000243">
    <property type="protein sequence ID" value="ABE07954.1"/>
    <property type="status" value="ALT_INIT"/>
    <property type="molecule type" value="Genomic_DNA"/>
</dbReference>
<dbReference type="RefSeq" id="WP_001296243.1">
    <property type="nucleotide sequence ID" value="NZ_CP064825.1"/>
</dbReference>
<dbReference type="KEGG" id="eci:UTI89_C2487"/>
<dbReference type="HOGENOM" id="CLU_211463_0_0_6"/>
<dbReference type="Proteomes" id="UP000001952">
    <property type="component" value="Chromosome"/>
</dbReference>
<protein>
    <recommendedName>
        <fullName>Uncharacterized protein YojO</fullName>
    </recommendedName>
</protein>
<comment type="similarity">
    <text evidence="1">Belongs to the YojO family.</text>
</comment>
<comment type="sequence caution" evidence="1">
    <conflict type="erroneous initiation">
        <sequence resource="EMBL-CDS" id="ABE07954"/>
    </conflict>
</comment>
<gene>
    <name type="primary">yojO</name>
    <name type="ordered locus">UTI89_C2487</name>
</gene>
<organism>
    <name type="scientific">Escherichia coli (strain UTI89 / UPEC)</name>
    <dbReference type="NCBI Taxonomy" id="364106"/>
    <lineage>
        <taxon>Bacteria</taxon>
        <taxon>Pseudomonadati</taxon>
        <taxon>Pseudomonadota</taxon>
        <taxon>Gammaproteobacteria</taxon>
        <taxon>Enterobacterales</taxon>
        <taxon>Enterobacteriaceae</taxon>
        <taxon>Escherichia</taxon>
    </lineage>
</organism>
<name>YOJO_ECOUT</name>
<feature type="chain" id="PRO_0000311793" description="Uncharacterized protein YojO">
    <location>
        <begin position="1"/>
        <end position="54"/>
    </location>
</feature>
<accession>Q1R9L0</accession>
<proteinExistence type="inferred from homology"/>
<reference key="1">
    <citation type="journal article" date="2006" name="Proc. Natl. Acad. Sci. U.S.A.">
        <title>Identification of genes subject to positive selection in uropathogenic strains of Escherichia coli: a comparative genomics approach.</title>
        <authorList>
            <person name="Chen S.L."/>
            <person name="Hung C.-S."/>
            <person name="Xu J."/>
            <person name="Reigstad C.S."/>
            <person name="Magrini V."/>
            <person name="Sabo A."/>
            <person name="Blasiar D."/>
            <person name="Bieri T."/>
            <person name="Meyer R.R."/>
            <person name="Ozersky P."/>
            <person name="Armstrong J.R."/>
            <person name="Fulton R.S."/>
            <person name="Latreille J.P."/>
            <person name="Spieth J."/>
            <person name="Hooton T.M."/>
            <person name="Mardis E.R."/>
            <person name="Hultgren S.J."/>
            <person name="Gordon J.I."/>
        </authorList>
    </citation>
    <scope>NUCLEOTIDE SEQUENCE [LARGE SCALE GENOMIC DNA]</scope>
    <source>
        <strain>UTI89 / UPEC</strain>
    </source>
</reference>
<evidence type="ECO:0000305" key="1"/>